<gene>
    <name type="primary">G1L2</name>
    <name type="ordered locus">Os06g0672400</name>
    <name type="ordered locus">LOC_Os06g46030</name>
    <name type="ORF">OSJNBa0032M14.22</name>
    <name type="ORF">P0485A07.32</name>
</gene>
<name>G1L2_ORYSJ</name>
<keyword id="KW-0217">Developmental protein</keyword>
<keyword id="KW-0238">DNA-binding</keyword>
<keyword id="KW-0539">Nucleus</keyword>
<keyword id="KW-1185">Reference proteome</keyword>
<keyword id="KW-0804">Transcription</keyword>
<keyword id="KW-0805">Transcription regulation</keyword>
<evidence type="ECO:0000250" key="1"/>
<evidence type="ECO:0000255" key="2">
    <source>
        <dbReference type="PROSITE-ProRule" id="PRU01033"/>
    </source>
</evidence>
<evidence type="ECO:0000256" key="3">
    <source>
        <dbReference type="SAM" id="MobiDB-lite"/>
    </source>
</evidence>
<evidence type="ECO:0000305" key="4"/>
<accession>Q652I1</accession>
<accession>A0A0P0WZX5</accession>
<proteinExistence type="evidence at protein level"/>
<sequence>MQGGGGGDSSGGGGGEAPRPSRYESQKRRDWHTFGQYLRNHRPPLELSRCSGAHVLEFLRYLDQFGKTKVHAAGCPFFGHPSPPAPCPCPLRQAWGSLDALVGRLRAAFEEHGGRPEANPFGARAVRLYLREVRDSQAKARGIAYEKKRRKRPPTSSSSSQAAAAAAAATSPASPAASPTPPPPPPTERSADVRPMPPEGHFFIPHPHFMHGHFLVPGGDADHHHQVSNAGNGGNTNTNTNTNTGGGGGNGDEMAVAMAAVAEAHAAGCMLPLSVFN</sequence>
<comment type="function">
    <text evidence="1">Probable transcription regulator that acts as a developmental regulator by promoting cell growth in response to light.</text>
</comment>
<comment type="subcellular location">
    <subcellularLocation>
        <location evidence="1">Nucleus</location>
    </subcellularLocation>
</comment>
<comment type="similarity">
    <text evidence="4">Belongs to the plant homeotic and developmental regulators ALOG protein family.</text>
</comment>
<feature type="chain" id="PRO_0000425301" description="Protein G1-like2">
    <location>
        <begin position="1"/>
        <end position="277"/>
    </location>
</feature>
<feature type="domain" description="ALOG" evidence="2">
    <location>
        <begin position="22"/>
        <end position="149"/>
    </location>
</feature>
<feature type="region of interest" description="Disordered" evidence="3">
    <location>
        <begin position="1"/>
        <end position="28"/>
    </location>
</feature>
<feature type="region of interest" description="Disordered" evidence="3">
    <location>
        <begin position="141"/>
        <end position="203"/>
    </location>
</feature>
<feature type="region of interest" description="Disordered" evidence="3">
    <location>
        <begin position="225"/>
        <end position="245"/>
    </location>
</feature>
<feature type="short sequence motif" description="Nuclear localization signal" evidence="1">
    <location>
        <begin position="147"/>
        <end position="151"/>
    </location>
</feature>
<feature type="compositionally biased region" description="Gly residues" evidence="3">
    <location>
        <begin position="1"/>
        <end position="16"/>
    </location>
</feature>
<feature type="compositionally biased region" description="Basic and acidic residues" evidence="3">
    <location>
        <begin position="19"/>
        <end position="28"/>
    </location>
</feature>
<feature type="compositionally biased region" description="Low complexity" evidence="3">
    <location>
        <begin position="154"/>
        <end position="177"/>
    </location>
</feature>
<feature type="compositionally biased region" description="Pro residues" evidence="3">
    <location>
        <begin position="178"/>
        <end position="187"/>
    </location>
</feature>
<dbReference type="EMBL" id="AB512491">
    <property type="protein sequence ID" value="BAI52980.1"/>
    <property type="molecule type" value="mRNA"/>
</dbReference>
<dbReference type="EMBL" id="AP005192">
    <property type="protein sequence ID" value="BAD46009.1"/>
    <property type="molecule type" value="Genomic_DNA"/>
</dbReference>
<dbReference type="EMBL" id="AP005610">
    <property type="protein sequence ID" value="BAD46286.1"/>
    <property type="molecule type" value="Genomic_DNA"/>
</dbReference>
<dbReference type="EMBL" id="AP008212">
    <property type="protein sequence ID" value="BAF20249.1"/>
    <property type="molecule type" value="Genomic_DNA"/>
</dbReference>
<dbReference type="EMBL" id="AP014962">
    <property type="protein sequence ID" value="BAS99087.1"/>
    <property type="molecule type" value="Genomic_DNA"/>
</dbReference>
<dbReference type="EMBL" id="AK068794">
    <property type="protein sequence ID" value="BAG91095.1"/>
    <property type="molecule type" value="mRNA"/>
</dbReference>
<dbReference type="RefSeq" id="XP_015641748.1">
    <property type="nucleotide sequence ID" value="XM_015786262.1"/>
</dbReference>
<dbReference type="SMR" id="Q652I1"/>
<dbReference type="FunCoup" id="Q652I1">
    <property type="interactions" value="417"/>
</dbReference>
<dbReference type="STRING" id="39947.Q652I1"/>
<dbReference type="PaxDb" id="39947-Q652I1"/>
<dbReference type="EnsemblPlants" id="Os06t0672400-01">
    <property type="protein sequence ID" value="Os06t0672400-01"/>
    <property type="gene ID" value="Os06g0672400"/>
</dbReference>
<dbReference type="Gramene" id="Os06t0672400-01">
    <property type="protein sequence ID" value="Os06t0672400-01"/>
    <property type="gene ID" value="Os06g0672400"/>
</dbReference>
<dbReference type="KEGG" id="dosa:Os06g0672400"/>
<dbReference type="eggNOG" id="ENOG502QT0B">
    <property type="taxonomic scope" value="Eukaryota"/>
</dbReference>
<dbReference type="HOGENOM" id="CLU_071168_2_0_1"/>
<dbReference type="InParanoid" id="Q652I1"/>
<dbReference type="OrthoDB" id="1906822at2759"/>
<dbReference type="Proteomes" id="UP000000763">
    <property type="component" value="Chromosome 6"/>
</dbReference>
<dbReference type="Proteomes" id="UP000059680">
    <property type="component" value="Chromosome 6"/>
</dbReference>
<dbReference type="GO" id="GO:0005634">
    <property type="term" value="C:nucleus"/>
    <property type="evidence" value="ECO:0000250"/>
    <property type="project" value="UniProtKB"/>
</dbReference>
<dbReference type="GO" id="GO:0003677">
    <property type="term" value="F:DNA binding"/>
    <property type="evidence" value="ECO:0007669"/>
    <property type="project" value="UniProtKB-KW"/>
</dbReference>
<dbReference type="GO" id="GO:0009299">
    <property type="term" value="P:mRNA transcription"/>
    <property type="evidence" value="ECO:0000250"/>
    <property type="project" value="UniProtKB"/>
</dbReference>
<dbReference type="GO" id="GO:0090698">
    <property type="term" value="P:post-embryonic plant morphogenesis"/>
    <property type="evidence" value="ECO:0000250"/>
    <property type="project" value="UniProtKB"/>
</dbReference>
<dbReference type="GO" id="GO:0009416">
    <property type="term" value="P:response to light stimulus"/>
    <property type="evidence" value="ECO:0000318"/>
    <property type="project" value="GO_Central"/>
</dbReference>
<dbReference type="InterPro" id="IPR040222">
    <property type="entry name" value="ALOG"/>
</dbReference>
<dbReference type="InterPro" id="IPR006936">
    <property type="entry name" value="ALOG_dom"/>
</dbReference>
<dbReference type="PANTHER" id="PTHR31165">
    <property type="entry name" value="PROTEIN G1-LIKE2"/>
    <property type="match status" value="1"/>
</dbReference>
<dbReference type="PANTHER" id="PTHR31165:SF121">
    <property type="entry name" value="PROTEIN G1-LIKE2"/>
    <property type="match status" value="1"/>
</dbReference>
<dbReference type="Pfam" id="PF04852">
    <property type="entry name" value="ALOG_dom"/>
    <property type="match status" value="1"/>
</dbReference>
<dbReference type="PROSITE" id="PS51697">
    <property type="entry name" value="ALOG"/>
    <property type="match status" value="1"/>
</dbReference>
<protein>
    <recommendedName>
        <fullName>Protein G1-like2</fullName>
    </recommendedName>
</protein>
<reference key="1">
    <citation type="journal article" date="2009" name="Proc. Natl. Acad. Sci. U.S.A.">
        <title>The homeotic gene long sterile lemma (G1) specifies sterile lemma identity in the rice spikelet.</title>
        <authorList>
            <person name="Yoshida A."/>
            <person name="Suzaki Y."/>
            <person name="Tanaka W."/>
            <person name="Hirano H.-Y."/>
        </authorList>
    </citation>
    <scope>NUCLEOTIDE SEQUENCE [MRNA]</scope>
    <scope>GENE FAMILY</scope>
    <scope>NOMENCLATURE</scope>
    <source>
        <strain>cv. Nipponbare</strain>
    </source>
</reference>
<reference key="2">
    <citation type="journal article" date="2005" name="Nature">
        <title>The map-based sequence of the rice genome.</title>
        <authorList>
            <consortium name="International rice genome sequencing project (IRGSP)"/>
        </authorList>
    </citation>
    <scope>NUCLEOTIDE SEQUENCE [LARGE SCALE GENOMIC DNA]</scope>
    <source>
        <strain>cv. Nipponbare</strain>
    </source>
</reference>
<reference key="3">
    <citation type="journal article" date="2008" name="Nucleic Acids Res.">
        <title>The rice annotation project database (RAP-DB): 2008 update.</title>
        <authorList>
            <consortium name="The rice annotation project (RAP)"/>
        </authorList>
    </citation>
    <scope>GENOME REANNOTATION</scope>
    <source>
        <strain>cv. Nipponbare</strain>
    </source>
</reference>
<reference key="4">
    <citation type="journal article" date="2013" name="Rice">
        <title>Improvement of the Oryza sativa Nipponbare reference genome using next generation sequence and optical map data.</title>
        <authorList>
            <person name="Kawahara Y."/>
            <person name="de la Bastide M."/>
            <person name="Hamilton J.P."/>
            <person name="Kanamori H."/>
            <person name="McCombie W.R."/>
            <person name="Ouyang S."/>
            <person name="Schwartz D.C."/>
            <person name="Tanaka T."/>
            <person name="Wu J."/>
            <person name="Zhou S."/>
            <person name="Childs K.L."/>
            <person name="Davidson R.M."/>
            <person name="Lin H."/>
            <person name="Quesada-Ocampo L."/>
            <person name="Vaillancourt B."/>
            <person name="Sakai H."/>
            <person name="Lee S.S."/>
            <person name="Kim J."/>
            <person name="Numa H."/>
            <person name="Itoh T."/>
            <person name="Buell C.R."/>
            <person name="Matsumoto T."/>
        </authorList>
    </citation>
    <scope>GENOME REANNOTATION</scope>
    <source>
        <strain>cv. Nipponbare</strain>
    </source>
</reference>
<reference key="5">
    <citation type="journal article" date="2003" name="Science">
        <title>Collection, mapping, and annotation of over 28,000 cDNA clones from japonica rice.</title>
        <authorList>
            <consortium name="The rice full-length cDNA consortium"/>
        </authorList>
    </citation>
    <scope>NUCLEOTIDE SEQUENCE [LARGE SCALE MRNA]</scope>
    <source>
        <strain>cv. Nipponbare</strain>
    </source>
</reference>
<reference key="6">
    <citation type="journal article" date="2012" name="Biol. Direct">
        <title>ALOG domains: provenance of plant homeotic and developmental regulators from the DNA-binding domain of a novel class of DIRS1-type retroposons.</title>
        <authorList>
            <person name="Iyer L.M."/>
            <person name="Aravind L."/>
        </authorList>
    </citation>
    <scope>DNA-BINDING</scope>
    <scope>GENE FAMILY</scope>
</reference>
<organism>
    <name type="scientific">Oryza sativa subsp. japonica</name>
    <name type="common">Rice</name>
    <dbReference type="NCBI Taxonomy" id="39947"/>
    <lineage>
        <taxon>Eukaryota</taxon>
        <taxon>Viridiplantae</taxon>
        <taxon>Streptophyta</taxon>
        <taxon>Embryophyta</taxon>
        <taxon>Tracheophyta</taxon>
        <taxon>Spermatophyta</taxon>
        <taxon>Magnoliopsida</taxon>
        <taxon>Liliopsida</taxon>
        <taxon>Poales</taxon>
        <taxon>Poaceae</taxon>
        <taxon>BOP clade</taxon>
        <taxon>Oryzoideae</taxon>
        <taxon>Oryzeae</taxon>
        <taxon>Oryzinae</taxon>
        <taxon>Oryza</taxon>
        <taxon>Oryza sativa</taxon>
    </lineage>
</organism>